<organism>
    <name type="scientific">Shewanella baltica (strain OS185)</name>
    <dbReference type="NCBI Taxonomy" id="402882"/>
    <lineage>
        <taxon>Bacteria</taxon>
        <taxon>Pseudomonadati</taxon>
        <taxon>Pseudomonadota</taxon>
        <taxon>Gammaproteobacteria</taxon>
        <taxon>Alteromonadales</taxon>
        <taxon>Shewanellaceae</taxon>
        <taxon>Shewanella</taxon>
    </lineage>
</organism>
<keyword id="KW-0067">ATP-binding</keyword>
<keyword id="KW-0436">Ligase</keyword>
<keyword id="KW-0547">Nucleotide-binding</keyword>
<keyword id="KW-0658">Purine biosynthesis</keyword>
<gene>
    <name evidence="1" type="primary">purC</name>
    <name type="ordered locus">Shew185_0527</name>
</gene>
<protein>
    <recommendedName>
        <fullName evidence="1">Phosphoribosylaminoimidazole-succinocarboxamide synthase</fullName>
        <ecNumber evidence="1">6.3.2.6</ecNumber>
    </recommendedName>
    <alternativeName>
        <fullName evidence="1">SAICAR synthetase</fullName>
    </alternativeName>
</protein>
<sequence length="367" mass="40914">MSLADSVLAINNDLPIRTDSPVHSGKVRSVYWLTDADSRRLITTKGYNVPEDTPLAIMVISDRISAFDCIFHGEGGLKGIPGKGAALNAISNHWFKLFAENGLADSHILDIPHPFVWIVQKARPIKVEAICRQYITGSMWRAYSKGERVFCGITLPEGLEKDQKLPELLITPSTKGILTGIPGVPAQDDVNISRSDIEANYQAFGFEKLEDIDLYEKLLKDGFKVISKALADIDQVFVDTKFEFGYVTDKDGNSKLIYMDEVGTPDSSRIWDGAAYRDGKILENSKEGFRQFLLNHFPDPDVLLNKDRMPEREALARDNDLPLEAMMQVSRTYTGVAEKVTGAPIPLPANPKADIIKILREEYDLIV</sequence>
<comment type="catalytic activity">
    <reaction evidence="1">
        <text>5-amino-1-(5-phospho-D-ribosyl)imidazole-4-carboxylate + L-aspartate + ATP = (2S)-2-[5-amino-1-(5-phospho-beta-D-ribosyl)imidazole-4-carboxamido]succinate + ADP + phosphate + 2 H(+)</text>
        <dbReference type="Rhea" id="RHEA:22628"/>
        <dbReference type="ChEBI" id="CHEBI:15378"/>
        <dbReference type="ChEBI" id="CHEBI:29991"/>
        <dbReference type="ChEBI" id="CHEBI:30616"/>
        <dbReference type="ChEBI" id="CHEBI:43474"/>
        <dbReference type="ChEBI" id="CHEBI:58443"/>
        <dbReference type="ChEBI" id="CHEBI:77657"/>
        <dbReference type="ChEBI" id="CHEBI:456216"/>
        <dbReference type="EC" id="6.3.2.6"/>
    </reaction>
</comment>
<comment type="pathway">
    <text evidence="1">Purine metabolism; IMP biosynthesis via de novo pathway; 5-amino-1-(5-phospho-D-ribosyl)imidazole-4-carboxamide from 5-amino-1-(5-phospho-D-ribosyl)imidazole-4-carboxylate: step 1/2.</text>
</comment>
<comment type="similarity">
    <text evidence="1">Belongs to the SAICAR synthetase family.</text>
</comment>
<accession>A6WIQ6</accession>
<evidence type="ECO:0000255" key="1">
    <source>
        <dbReference type="HAMAP-Rule" id="MF_00137"/>
    </source>
</evidence>
<proteinExistence type="inferred from homology"/>
<name>PUR7_SHEB8</name>
<dbReference type="EC" id="6.3.2.6" evidence="1"/>
<dbReference type="EMBL" id="CP000753">
    <property type="protein sequence ID" value="ABS06695.1"/>
    <property type="molecule type" value="Genomic_DNA"/>
</dbReference>
<dbReference type="RefSeq" id="WP_012088145.1">
    <property type="nucleotide sequence ID" value="NC_009665.1"/>
</dbReference>
<dbReference type="SMR" id="A6WIQ6"/>
<dbReference type="KEGG" id="sbm:Shew185_0527"/>
<dbReference type="HOGENOM" id="CLU_064197_0_0_6"/>
<dbReference type="UniPathway" id="UPA00074">
    <property type="reaction ID" value="UER00131"/>
</dbReference>
<dbReference type="GO" id="GO:0005737">
    <property type="term" value="C:cytoplasm"/>
    <property type="evidence" value="ECO:0007669"/>
    <property type="project" value="TreeGrafter"/>
</dbReference>
<dbReference type="GO" id="GO:0005524">
    <property type="term" value="F:ATP binding"/>
    <property type="evidence" value="ECO:0007669"/>
    <property type="project" value="UniProtKB-KW"/>
</dbReference>
<dbReference type="GO" id="GO:0004639">
    <property type="term" value="F:phosphoribosylaminoimidazolesuccinocarboxamide synthase activity"/>
    <property type="evidence" value="ECO:0007669"/>
    <property type="project" value="UniProtKB-UniRule"/>
</dbReference>
<dbReference type="GO" id="GO:0006189">
    <property type="term" value="P:'de novo' IMP biosynthetic process"/>
    <property type="evidence" value="ECO:0007669"/>
    <property type="project" value="UniProtKB-UniRule"/>
</dbReference>
<dbReference type="CDD" id="cd01414">
    <property type="entry name" value="SAICAR_synt_Sc"/>
    <property type="match status" value="1"/>
</dbReference>
<dbReference type="FunFam" id="3.30.200.20:FF:000597">
    <property type="entry name" value="Phosphoribosylaminoimidazole-succinocarboxamide synthase"/>
    <property type="match status" value="1"/>
</dbReference>
<dbReference type="FunFam" id="3.30.470.20:FF:000067">
    <property type="entry name" value="Phosphoribosylaminoimidazole-succinocarboxamide synthase"/>
    <property type="match status" value="1"/>
</dbReference>
<dbReference type="Gene3D" id="3.30.470.20">
    <property type="entry name" value="ATP-grasp fold, B domain"/>
    <property type="match status" value="1"/>
</dbReference>
<dbReference type="Gene3D" id="3.30.200.20">
    <property type="entry name" value="Phosphorylase Kinase, domain 1"/>
    <property type="match status" value="1"/>
</dbReference>
<dbReference type="HAMAP" id="MF_00137">
    <property type="entry name" value="SAICAR_synth"/>
    <property type="match status" value="1"/>
</dbReference>
<dbReference type="InterPro" id="IPR028923">
    <property type="entry name" value="SAICAR_synt/ADE2_N"/>
</dbReference>
<dbReference type="InterPro" id="IPR014106">
    <property type="entry name" value="SAICAR_synthase_Vibrio-typ"/>
</dbReference>
<dbReference type="InterPro" id="IPR018236">
    <property type="entry name" value="SAICAR_synthetase_CS"/>
</dbReference>
<dbReference type="NCBIfam" id="NF010567">
    <property type="entry name" value="PRK13960.1"/>
    <property type="match status" value="1"/>
</dbReference>
<dbReference type="NCBIfam" id="TIGR02735">
    <property type="entry name" value="purC_vibrio"/>
    <property type="match status" value="1"/>
</dbReference>
<dbReference type="PANTHER" id="PTHR43700">
    <property type="entry name" value="PHOSPHORIBOSYLAMINOIMIDAZOLE-SUCCINOCARBOXAMIDE SYNTHASE"/>
    <property type="match status" value="1"/>
</dbReference>
<dbReference type="PANTHER" id="PTHR43700:SF1">
    <property type="entry name" value="PHOSPHORIBOSYLAMINOIMIDAZOLE-SUCCINOCARBOXAMIDE SYNTHASE"/>
    <property type="match status" value="1"/>
</dbReference>
<dbReference type="Pfam" id="PF01259">
    <property type="entry name" value="SAICAR_synt"/>
    <property type="match status" value="1"/>
</dbReference>
<dbReference type="SUPFAM" id="SSF56104">
    <property type="entry name" value="SAICAR synthase-like"/>
    <property type="match status" value="1"/>
</dbReference>
<dbReference type="PROSITE" id="PS01057">
    <property type="entry name" value="SAICAR_SYNTHETASE_1"/>
    <property type="match status" value="1"/>
</dbReference>
<reference key="1">
    <citation type="submission" date="2007-07" db="EMBL/GenBank/DDBJ databases">
        <title>Complete sequence of chromosome of Shewanella baltica OS185.</title>
        <authorList>
            <consortium name="US DOE Joint Genome Institute"/>
            <person name="Copeland A."/>
            <person name="Lucas S."/>
            <person name="Lapidus A."/>
            <person name="Barry K."/>
            <person name="Glavina del Rio T."/>
            <person name="Dalin E."/>
            <person name="Tice H."/>
            <person name="Pitluck S."/>
            <person name="Sims D."/>
            <person name="Brettin T."/>
            <person name="Bruce D."/>
            <person name="Detter J.C."/>
            <person name="Han C."/>
            <person name="Schmutz J."/>
            <person name="Larimer F."/>
            <person name="Land M."/>
            <person name="Hauser L."/>
            <person name="Kyrpides N."/>
            <person name="Mikhailova N."/>
            <person name="Brettar I."/>
            <person name="Rodrigues J."/>
            <person name="Konstantinidis K."/>
            <person name="Tiedje J."/>
            <person name="Richardson P."/>
        </authorList>
    </citation>
    <scope>NUCLEOTIDE SEQUENCE [LARGE SCALE GENOMIC DNA]</scope>
    <source>
        <strain>OS185</strain>
    </source>
</reference>
<feature type="chain" id="PRO_1000117845" description="Phosphoribosylaminoimidazole-succinocarboxamide synthase">
    <location>
        <begin position="1"/>
        <end position="367"/>
    </location>
</feature>